<evidence type="ECO:0000305" key="1"/>
<sequence>MVQRLTYRRRLSYRTTSNATKIVKTPGGRLVYQYIGKTGKVPRCGECGVNLAGIPALRPYQYKNLPKSRRTVSRAYGGSKCAKCVRNRIVRAFLIEEQKTAKIVFKKQQKDLKQKKDKKSSK</sequence>
<reference key="1">
    <citation type="journal article" date="2005" name="Nature">
        <title>The genome of the social amoeba Dictyostelium discoideum.</title>
        <authorList>
            <person name="Eichinger L."/>
            <person name="Pachebat J.A."/>
            <person name="Gloeckner G."/>
            <person name="Rajandream M.A."/>
            <person name="Sucgang R."/>
            <person name="Berriman M."/>
            <person name="Song J."/>
            <person name="Olsen R."/>
            <person name="Szafranski K."/>
            <person name="Xu Q."/>
            <person name="Tunggal B."/>
            <person name="Kummerfeld S."/>
            <person name="Madera M."/>
            <person name="Konfortov B.A."/>
            <person name="Rivero F."/>
            <person name="Bankier A.T."/>
            <person name="Lehmann R."/>
            <person name="Hamlin N."/>
            <person name="Davies R."/>
            <person name="Gaudet P."/>
            <person name="Fey P."/>
            <person name="Pilcher K."/>
            <person name="Chen G."/>
            <person name="Saunders D."/>
            <person name="Sodergren E.J."/>
            <person name="Davis P."/>
            <person name="Kerhornou A."/>
            <person name="Nie X."/>
            <person name="Hall N."/>
            <person name="Anjard C."/>
            <person name="Hemphill L."/>
            <person name="Bason N."/>
            <person name="Farbrother P."/>
            <person name="Desany B."/>
            <person name="Just E."/>
            <person name="Morio T."/>
            <person name="Rost R."/>
            <person name="Churcher C.M."/>
            <person name="Cooper J."/>
            <person name="Haydock S."/>
            <person name="van Driessche N."/>
            <person name="Cronin A."/>
            <person name="Goodhead I."/>
            <person name="Muzny D.M."/>
            <person name="Mourier T."/>
            <person name="Pain A."/>
            <person name="Lu M."/>
            <person name="Harper D."/>
            <person name="Lindsay R."/>
            <person name="Hauser H."/>
            <person name="James K.D."/>
            <person name="Quiles M."/>
            <person name="Madan Babu M."/>
            <person name="Saito T."/>
            <person name="Buchrieser C."/>
            <person name="Wardroper A."/>
            <person name="Felder M."/>
            <person name="Thangavelu M."/>
            <person name="Johnson D."/>
            <person name="Knights A."/>
            <person name="Loulseged H."/>
            <person name="Mungall K.L."/>
            <person name="Oliver K."/>
            <person name="Price C."/>
            <person name="Quail M.A."/>
            <person name="Urushihara H."/>
            <person name="Hernandez J."/>
            <person name="Rabbinowitsch E."/>
            <person name="Steffen D."/>
            <person name="Sanders M."/>
            <person name="Ma J."/>
            <person name="Kohara Y."/>
            <person name="Sharp S."/>
            <person name="Simmonds M.N."/>
            <person name="Spiegler S."/>
            <person name="Tivey A."/>
            <person name="Sugano S."/>
            <person name="White B."/>
            <person name="Walker D."/>
            <person name="Woodward J.R."/>
            <person name="Winckler T."/>
            <person name="Tanaka Y."/>
            <person name="Shaulsky G."/>
            <person name="Schleicher M."/>
            <person name="Weinstock G.M."/>
            <person name="Rosenthal A."/>
            <person name="Cox E.C."/>
            <person name="Chisholm R.L."/>
            <person name="Gibbs R.A."/>
            <person name="Loomis W.F."/>
            <person name="Platzer M."/>
            <person name="Kay R.R."/>
            <person name="Williams J.G."/>
            <person name="Dear P.H."/>
            <person name="Noegel A.A."/>
            <person name="Barrell B.G."/>
            <person name="Kuspa A."/>
        </authorList>
    </citation>
    <scope>NUCLEOTIDE SEQUENCE [LARGE SCALE GENOMIC DNA]</scope>
    <source>
        <strain>AX4</strain>
    </source>
</reference>
<accession>Q54LV8</accession>
<proteinExistence type="inferred from homology"/>
<dbReference type="EMBL" id="AAFI02000085">
    <property type="protein sequence ID" value="EAL64219.1"/>
    <property type="molecule type" value="Genomic_DNA"/>
</dbReference>
<dbReference type="RefSeq" id="XP_637722.1">
    <property type="nucleotide sequence ID" value="XM_632630.1"/>
</dbReference>
<dbReference type="SMR" id="Q54LV8"/>
<dbReference type="FunCoup" id="Q54LV8">
    <property type="interactions" value="601"/>
</dbReference>
<dbReference type="STRING" id="44689.Q54LV8"/>
<dbReference type="PaxDb" id="44689-DDB0231151"/>
<dbReference type="EnsemblProtists" id="EAL64219">
    <property type="protein sequence ID" value="EAL64219"/>
    <property type="gene ID" value="DDB_G0286389"/>
</dbReference>
<dbReference type="GeneID" id="8625587"/>
<dbReference type="KEGG" id="ddi:DDB_G0286389"/>
<dbReference type="dictyBase" id="DDB_G0286389">
    <property type="gene designation" value="rpl34"/>
</dbReference>
<dbReference type="VEuPathDB" id="AmoebaDB:DDB_G0286389"/>
<dbReference type="eggNOG" id="KOG1790">
    <property type="taxonomic scope" value="Eukaryota"/>
</dbReference>
<dbReference type="HOGENOM" id="CLU_118652_1_1_1"/>
<dbReference type="InParanoid" id="Q54LV8"/>
<dbReference type="OMA" id="RCHKCVR"/>
<dbReference type="PhylomeDB" id="Q54LV8"/>
<dbReference type="PRO" id="PR:Q54LV8"/>
<dbReference type="Proteomes" id="UP000002195">
    <property type="component" value="Chromosome 4"/>
</dbReference>
<dbReference type="GO" id="GO:0022625">
    <property type="term" value="C:cytosolic large ribosomal subunit"/>
    <property type="evidence" value="ECO:0000318"/>
    <property type="project" value="GO_Central"/>
</dbReference>
<dbReference type="GO" id="GO:0003735">
    <property type="term" value="F:structural constituent of ribosome"/>
    <property type="evidence" value="ECO:0000318"/>
    <property type="project" value="GO_Central"/>
</dbReference>
<dbReference type="GO" id="GO:0042254">
    <property type="term" value="P:ribosome biogenesis"/>
    <property type="evidence" value="ECO:0000318"/>
    <property type="project" value="GO_Central"/>
</dbReference>
<dbReference type="GO" id="GO:0006412">
    <property type="term" value="P:translation"/>
    <property type="evidence" value="ECO:0007669"/>
    <property type="project" value="InterPro"/>
</dbReference>
<dbReference type="Gene3D" id="6.20.340.10">
    <property type="match status" value="1"/>
</dbReference>
<dbReference type="Gene3D" id="6.20.370.70">
    <property type="match status" value="1"/>
</dbReference>
<dbReference type="InterPro" id="IPR008195">
    <property type="entry name" value="Ribosomal_eL34"/>
</dbReference>
<dbReference type="InterPro" id="IPR038562">
    <property type="entry name" value="Ribosomal_eL34_C_sf"/>
</dbReference>
<dbReference type="PANTHER" id="PTHR46595">
    <property type="entry name" value="60S RIBOSOMAL PROTEIN L34"/>
    <property type="match status" value="1"/>
</dbReference>
<dbReference type="Pfam" id="PF01199">
    <property type="entry name" value="Ribosomal_L34e"/>
    <property type="match status" value="1"/>
</dbReference>
<dbReference type="PRINTS" id="PR01250">
    <property type="entry name" value="RIBOSOMALL34"/>
</dbReference>
<feature type="chain" id="PRO_0000320061" description="Large ribosomal subunit protein eL34">
    <location>
        <begin position="1"/>
        <end position="122"/>
    </location>
</feature>
<gene>
    <name type="primary">rpl34</name>
    <name type="ORF">DDB_G0286389</name>
</gene>
<keyword id="KW-1185">Reference proteome</keyword>
<keyword id="KW-0687">Ribonucleoprotein</keyword>
<keyword id="KW-0689">Ribosomal protein</keyword>
<name>RL34_DICDI</name>
<protein>
    <recommendedName>
        <fullName evidence="1">Large ribosomal subunit protein eL34</fullName>
    </recommendedName>
    <alternativeName>
        <fullName>60S ribosomal protein L34</fullName>
    </alternativeName>
</protein>
<comment type="similarity">
    <text evidence="1">Belongs to the eukaryotic ribosomal protein eL34 family.</text>
</comment>
<organism>
    <name type="scientific">Dictyostelium discoideum</name>
    <name type="common">Social amoeba</name>
    <dbReference type="NCBI Taxonomy" id="44689"/>
    <lineage>
        <taxon>Eukaryota</taxon>
        <taxon>Amoebozoa</taxon>
        <taxon>Evosea</taxon>
        <taxon>Eumycetozoa</taxon>
        <taxon>Dictyostelia</taxon>
        <taxon>Dictyosteliales</taxon>
        <taxon>Dictyosteliaceae</taxon>
        <taxon>Dictyostelium</taxon>
    </lineage>
</organism>